<dbReference type="EMBL" id="AF003543">
    <property type="protein sequence ID" value="AAB97665.1"/>
    <property type="molecule type" value="Genomic_DNA"/>
</dbReference>
<dbReference type="SMR" id="O16017"/>
<dbReference type="GlyCosmos" id="O16017">
    <property type="glycosylation" value="1 site, No reported glycans"/>
</dbReference>
<dbReference type="GO" id="GO:0042995">
    <property type="term" value="C:cell projection"/>
    <property type="evidence" value="ECO:0007669"/>
    <property type="project" value="UniProtKB-KW"/>
</dbReference>
<dbReference type="GO" id="GO:0005886">
    <property type="term" value="C:plasma membrane"/>
    <property type="evidence" value="ECO:0000250"/>
    <property type="project" value="UniProtKB"/>
</dbReference>
<dbReference type="GO" id="GO:0004930">
    <property type="term" value="F:G protein-coupled receptor activity"/>
    <property type="evidence" value="ECO:0007669"/>
    <property type="project" value="UniProtKB-KW"/>
</dbReference>
<dbReference type="GO" id="GO:0009881">
    <property type="term" value="F:photoreceptor activity"/>
    <property type="evidence" value="ECO:0007669"/>
    <property type="project" value="UniProtKB-KW"/>
</dbReference>
<dbReference type="GO" id="GO:0007602">
    <property type="term" value="P:phototransduction"/>
    <property type="evidence" value="ECO:0007669"/>
    <property type="project" value="UniProtKB-KW"/>
</dbReference>
<dbReference type="GO" id="GO:0007601">
    <property type="term" value="P:visual perception"/>
    <property type="evidence" value="ECO:0007669"/>
    <property type="project" value="UniProtKB-KW"/>
</dbReference>
<dbReference type="CDD" id="cd15079">
    <property type="entry name" value="7tmA_photoreceptors_insect"/>
    <property type="match status" value="1"/>
</dbReference>
<dbReference type="FunFam" id="1.20.1070.10:FF:000044">
    <property type="entry name" value="Opsin, ultraviolet-sensitive"/>
    <property type="match status" value="1"/>
</dbReference>
<dbReference type="Gene3D" id="1.20.1070.10">
    <property type="entry name" value="Rhodopsin 7-helix transmembrane proteins"/>
    <property type="match status" value="1"/>
</dbReference>
<dbReference type="InterPro" id="IPR050125">
    <property type="entry name" value="GPCR_opsins"/>
</dbReference>
<dbReference type="InterPro" id="IPR000276">
    <property type="entry name" value="GPCR_Rhodpsn"/>
</dbReference>
<dbReference type="InterPro" id="IPR017452">
    <property type="entry name" value="GPCR_Rhodpsn_7TM"/>
</dbReference>
<dbReference type="InterPro" id="IPR001760">
    <property type="entry name" value="Opsin"/>
</dbReference>
<dbReference type="InterPro" id="IPR001391">
    <property type="entry name" value="Opsin_lateye"/>
</dbReference>
<dbReference type="InterPro" id="IPR027430">
    <property type="entry name" value="Retinal_BS"/>
</dbReference>
<dbReference type="PANTHER" id="PTHR24240">
    <property type="entry name" value="OPSIN"/>
    <property type="match status" value="1"/>
</dbReference>
<dbReference type="Pfam" id="PF00001">
    <property type="entry name" value="7tm_1"/>
    <property type="match status" value="1"/>
</dbReference>
<dbReference type="PRINTS" id="PR00237">
    <property type="entry name" value="GPCRRHODOPSN"/>
</dbReference>
<dbReference type="PRINTS" id="PR00238">
    <property type="entry name" value="OPSIN"/>
</dbReference>
<dbReference type="PRINTS" id="PR00578">
    <property type="entry name" value="OPSINLTRLEYE"/>
</dbReference>
<dbReference type="SUPFAM" id="SSF81321">
    <property type="entry name" value="Family A G protein-coupled receptor-like"/>
    <property type="match status" value="1"/>
</dbReference>
<dbReference type="PROSITE" id="PS00237">
    <property type="entry name" value="G_PROTEIN_RECEP_F1_1"/>
    <property type="match status" value="1"/>
</dbReference>
<dbReference type="PROSITE" id="PS50262">
    <property type="entry name" value="G_PROTEIN_RECEP_F1_2"/>
    <property type="match status" value="1"/>
</dbReference>
<dbReference type="PROSITE" id="PS00238">
    <property type="entry name" value="OPSIN"/>
    <property type="match status" value="1"/>
</dbReference>
<sequence length="301" mass="34637">LHMIHLHWYQYPPMNPMMYPLLLVFMLITGILCLAGNFVTIWVFMNTKSLRTPANLLVVNLAMSDFLMMFTMFPPMMITCYYHTWTLGATFCEVYAFLGNLCGCASIWTMVFITFDRYNVIVKGVAGEPLSTKKASLWILTVWVLSFTWCVAPFFGWNRYVPEGNLTGCGTDYLSEDILSRSYLYIYSTWVYFLPLAITIYCYVFIIKAVAAHEKGMRDQAKKMGIKSLRNEEAQKTSAECRLAKIAMTTVALWFIAWTPYLLINWVGMFARSYLSPVYTIWGYVFAKANAVYNPIVYAIS</sequence>
<feature type="chain" id="PRO_0000197738" description="Rhodopsin">
    <location>
        <begin position="1" status="less than"/>
        <end position="301" status="greater than"/>
    </location>
</feature>
<feature type="topological domain" description="Extracellular" evidence="6">
    <location>
        <begin position="1" status="less than"/>
        <end position="18"/>
    </location>
</feature>
<feature type="transmembrane region" description="Helical; Name=1" evidence="1">
    <location>
        <begin position="19"/>
        <end position="43"/>
    </location>
</feature>
<feature type="topological domain" description="Cytoplasmic" evidence="6">
    <location>
        <begin position="44"/>
        <end position="55"/>
    </location>
</feature>
<feature type="transmembrane region" description="Helical; Name=2" evidence="1">
    <location>
        <begin position="56"/>
        <end position="78"/>
    </location>
</feature>
<feature type="topological domain" description="Extracellular" evidence="6">
    <location>
        <begin position="79"/>
        <end position="92"/>
    </location>
</feature>
<feature type="transmembrane region" description="Helical; Name=3" evidence="1">
    <location>
        <begin position="93"/>
        <end position="115"/>
    </location>
</feature>
<feature type="topological domain" description="Cytoplasmic" evidence="6">
    <location>
        <begin position="116"/>
        <end position="134"/>
    </location>
</feature>
<feature type="transmembrane region" description="Helical; Name=4" evidence="1">
    <location>
        <begin position="135"/>
        <end position="155"/>
    </location>
</feature>
<feature type="topological domain" description="Extracellular" evidence="6">
    <location>
        <begin position="156"/>
        <end position="182"/>
    </location>
</feature>
<feature type="transmembrane region" description="Helical; Name=5" evidence="1">
    <location>
        <begin position="183"/>
        <end position="204"/>
    </location>
</feature>
<feature type="topological domain" description="Cytoplasmic" evidence="6">
    <location>
        <begin position="205"/>
        <end position="245"/>
    </location>
</feature>
<feature type="transmembrane region" description="Helical; Name=6" evidence="1">
    <location>
        <begin position="246"/>
        <end position="267"/>
    </location>
</feature>
<feature type="topological domain" description="Extracellular" evidence="6">
    <location>
        <begin position="268"/>
        <end position="278"/>
    </location>
</feature>
<feature type="transmembrane region" description="Helical; Name=7" evidence="1">
    <location>
        <begin position="279"/>
        <end position="300"/>
    </location>
</feature>
<feature type="short sequence motif" description="'Ionic lock' involved in activated form stabilization" evidence="1">
    <location>
        <begin position="116"/>
        <end position="118"/>
    </location>
</feature>
<feature type="modified residue" description="N6-(retinylidene)lysine" evidence="1">
    <location>
        <position position="288"/>
    </location>
</feature>
<feature type="glycosylation site" description="N-linked (GlcNAc...) asparagine" evidence="4">
    <location>
        <position position="165"/>
    </location>
</feature>
<feature type="disulfide bond" evidence="5">
    <location>
        <begin position="92"/>
        <end position="169"/>
    </location>
</feature>
<feature type="non-terminal residue">
    <location>
        <position position="1"/>
    </location>
</feature>
<feature type="non-terminal residue">
    <location>
        <position position="301"/>
    </location>
</feature>
<proteinExistence type="inferred from homology"/>
<gene>
    <name type="primary">RHO</name>
</gene>
<protein>
    <recommendedName>
        <fullName>Rhodopsin</fullName>
    </recommendedName>
</protein>
<reference key="1">
    <citation type="journal article" date="1997" name="J. Mol. Evol.">
        <title>The molecular evolution of visual pigments of freshwater crayfishes (Decapoda: Cambaridae).</title>
        <authorList>
            <person name="Crandall K.A."/>
            <person name="Cronin T.W."/>
        </authorList>
    </citation>
    <scope>NUCLEOTIDE SEQUENCE [GENOMIC DNA]</scope>
</reference>
<accession>O16017</accession>
<keyword id="KW-1003">Cell membrane</keyword>
<keyword id="KW-0966">Cell projection</keyword>
<keyword id="KW-0157">Chromophore</keyword>
<keyword id="KW-1015">Disulfide bond</keyword>
<keyword id="KW-0297">G-protein coupled receptor</keyword>
<keyword id="KW-0325">Glycoprotein</keyword>
<keyword id="KW-0472">Membrane</keyword>
<keyword id="KW-0597">Phosphoprotein</keyword>
<keyword id="KW-0600">Photoreceptor protein</keyword>
<keyword id="KW-0675">Receptor</keyword>
<keyword id="KW-0681">Retinal protein</keyword>
<keyword id="KW-0716">Sensory transduction</keyword>
<keyword id="KW-0807">Transducer</keyword>
<keyword id="KW-0812">Transmembrane</keyword>
<keyword id="KW-1133">Transmembrane helix</keyword>
<keyword id="KW-0844">Vision</keyword>
<evidence type="ECO:0000250" key="1">
    <source>
        <dbReference type="UniProtKB" id="P02699"/>
    </source>
</evidence>
<evidence type="ECO:0000250" key="2">
    <source>
        <dbReference type="UniProtKB" id="P31356"/>
    </source>
</evidence>
<evidence type="ECO:0000250" key="3">
    <source>
        <dbReference type="UniProtKB" id="P35356"/>
    </source>
</evidence>
<evidence type="ECO:0000255" key="4"/>
<evidence type="ECO:0000255" key="5">
    <source>
        <dbReference type="PROSITE-ProRule" id="PRU00521"/>
    </source>
</evidence>
<evidence type="ECO:0000305" key="6"/>
<organism>
    <name type="scientific">Lacunicambarus ludovicianus</name>
    <name type="common">Painted devil crayfish</name>
    <name type="synonym">Cambarus ludovicianus</name>
    <dbReference type="NCBI Taxonomy" id="2315848"/>
    <lineage>
        <taxon>Eukaryota</taxon>
        <taxon>Metazoa</taxon>
        <taxon>Ecdysozoa</taxon>
        <taxon>Arthropoda</taxon>
        <taxon>Crustacea</taxon>
        <taxon>Multicrustacea</taxon>
        <taxon>Malacostraca</taxon>
        <taxon>Eumalacostraca</taxon>
        <taxon>Eucarida</taxon>
        <taxon>Decapoda</taxon>
        <taxon>Pleocyemata</taxon>
        <taxon>Astacidea</taxon>
        <taxon>Astacoidea</taxon>
        <taxon>Cambaridae</taxon>
        <taxon>Lacunicambarus</taxon>
    </lineage>
</organism>
<comment type="function">
    <text evidence="3">Photoreceptor required for image-forming vision at low light intensity. Can use both retinal and 3-dehydroretinal as visual pigment. Light-induced isomerization of 11-cis to all-trans retinal triggers a conformational change that activates signaling via G-proteins. Signaling via GNAQ probably mediates the activation of phospholipase C.</text>
</comment>
<comment type="subunit">
    <text evidence="3">Homodimer. Interacts with GNAQ.</text>
</comment>
<comment type="subcellular location">
    <subcellularLocation>
        <location evidence="3">Cell projection</location>
        <location evidence="3">Rhabdomere membrane</location>
        <topology evidence="2">Multi-pass membrane protein</topology>
    </subcellularLocation>
</comment>
<comment type="PTM">
    <text evidence="1">Contains one covalently linked retinal chromophore.</text>
</comment>
<comment type="similarity">
    <text evidence="5">Belongs to the G-protein coupled receptor 1 family. Opsin subfamily.</text>
</comment>
<name>OPSD_LACLU</name>